<evidence type="ECO:0000256" key="1">
    <source>
        <dbReference type="SAM" id="MobiDB-lite"/>
    </source>
</evidence>
<evidence type="ECO:0000269" key="2">
    <source>
    </source>
</evidence>
<evidence type="ECO:0000305" key="3"/>
<evidence type="ECO:0007829" key="4">
    <source>
        <dbReference type="PDB" id="1A0S"/>
    </source>
</evidence>
<gene>
    <name type="primary">scrY</name>
</gene>
<protein>
    <recommendedName>
        <fullName>Sucrose porin</fullName>
    </recommendedName>
</protein>
<reference key="1">
    <citation type="journal article" date="1991" name="J. Bacteriol.">
        <title>Plasmid-mediated sucrose metabolism in Escherichia coli: characterization of scrY, the structural gene for a phosphoenolpyruvate-dependent sucrose phosphotransferase system outer membrane porin.</title>
        <authorList>
            <person name="Hardesty C."/>
            <person name="Ferran C."/>
            <person name="DiRienzo J.M."/>
        </authorList>
    </citation>
    <scope>NUCLEOTIDE SEQUENCE [GENOMIC DNA]</scope>
    <scope>PROTEIN SEQUENCE OF 23-33</scope>
    <source>
        <strain>6153-62</strain>
    </source>
</reference>
<reference key="2">
    <citation type="journal article" date="1991" name="Mol. Microbiol.">
        <title>A sugar-specific porin, ScrY, is involved in sucrose uptake in enteric bacteria.</title>
        <authorList>
            <person name="Schmid K."/>
            <person name="Ebner R."/>
            <person name="Jahreis K."/>
            <person name="Lengeler J.W."/>
            <person name="Titgemeyer F."/>
        </authorList>
    </citation>
    <scope>NUCLEOTIDE SEQUENCE [GENOMIC DNA]</scope>
</reference>
<reference key="3">
    <citation type="journal article" date="1998" name="Nat. Struct. Biol.">
        <title>Structure of the sucrose-specific porin ScrY from Salmonella typhimurium and its complex with sucrose.</title>
        <authorList>
            <person name="Forst D."/>
            <person name="Welte W."/>
            <person name="Wacker T."/>
            <person name="Diederichs K."/>
        </authorList>
    </citation>
    <scope>X-RAY CRYSTALLOGRAPHY (2.4 ANGSTROMS)</scope>
</reference>
<dbReference type="EMBL" id="M38416">
    <property type="protein sequence ID" value="AAA98417.1"/>
    <property type="molecule type" value="Genomic_DNA"/>
</dbReference>
<dbReference type="EMBL" id="X57400">
    <property type="protein sequence ID" value="CAA40656.1"/>
    <property type="molecule type" value="Genomic_DNA"/>
</dbReference>
<dbReference type="PIR" id="A39127">
    <property type="entry name" value="A39127"/>
</dbReference>
<dbReference type="PIR" id="S15193">
    <property type="entry name" value="S15193"/>
</dbReference>
<dbReference type="PDB" id="1A0S">
    <property type="method" value="X-ray"/>
    <property type="resolution" value="2.40 A"/>
    <property type="chains" value="P/Q/R=93-505"/>
</dbReference>
<dbReference type="PDB" id="1A0T">
    <property type="method" value="X-ray"/>
    <property type="resolution" value="2.40 A"/>
    <property type="chains" value="P/Q/R=93-505"/>
</dbReference>
<dbReference type="PDB" id="1OH2">
    <property type="method" value="X-ray"/>
    <property type="resolution" value="2.40 A"/>
    <property type="chains" value="P/Q/R=93-505"/>
</dbReference>
<dbReference type="PDBsum" id="1A0S"/>
<dbReference type="PDBsum" id="1A0T"/>
<dbReference type="PDBsum" id="1OH2"/>
<dbReference type="PCDDB" id="P22340"/>
<dbReference type="SMR" id="P22340"/>
<dbReference type="DrugBank" id="DB02772">
    <property type="generic name" value="Sucrose"/>
</dbReference>
<dbReference type="TCDB" id="1.B.3.1.2">
    <property type="family name" value="the sugar porin (sp) family"/>
</dbReference>
<dbReference type="EvolutionaryTrace" id="P22340"/>
<dbReference type="GO" id="GO:0009279">
    <property type="term" value="C:cell outer membrane"/>
    <property type="evidence" value="ECO:0007669"/>
    <property type="project" value="UniProtKB-SubCell"/>
</dbReference>
<dbReference type="GO" id="GO:0046930">
    <property type="term" value="C:pore complex"/>
    <property type="evidence" value="ECO:0007669"/>
    <property type="project" value="UniProtKB-KW"/>
</dbReference>
<dbReference type="GO" id="GO:0015144">
    <property type="term" value="F:carbohydrate transmembrane transporter activity"/>
    <property type="evidence" value="ECO:0007669"/>
    <property type="project" value="TreeGrafter"/>
</dbReference>
<dbReference type="GO" id="GO:0015288">
    <property type="term" value="F:porin activity"/>
    <property type="evidence" value="ECO:0007669"/>
    <property type="project" value="UniProtKB-KW"/>
</dbReference>
<dbReference type="GO" id="GO:0006811">
    <property type="term" value="P:monoatomic ion transport"/>
    <property type="evidence" value="ECO:0007669"/>
    <property type="project" value="UniProtKB-KW"/>
</dbReference>
<dbReference type="GO" id="GO:0015774">
    <property type="term" value="P:polysaccharide transport"/>
    <property type="evidence" value="ECO:0007669"/>
    <property type="project" value="TreeGrafter"/>
</dbReference>
<dbReference type="CDD" id="cd01346">
    <property type="entry name" value="Maltoporin-like"/>
    <property type="match status" value="1"/>
</dbReference>
<dbReference type="Gene3D" id="1.20.5.340">
    <property type="match status" value="1"/>
</dbReference>
<dbReference type="Gene3D" id="2.40.170.10">
    <property type="entry name" value="Porin, LamB type"/>
    <property type="match status" value="1"/>
</dbReference>
<dbReference type="InterPro" id="IPR050286">
    <property type="entry name" value="G_neg_Bact_CarbUptk_Porin"/>
</dbReference>
<dbReference type="InterPro" id="IPR021570">
    <property type="entry name" value="LamB-type_porin_N_dom"/>
</dbReference>
<dbReference type="InterPro" id="IPR003192">
    <property type="entry name" value="Porin_LamB"/>
</dbReference>
<dbReference type="InterPro" id="IPR036998">
    <property type="entry name" value="Porin_LamB_sf"/>
</dbReference>
<dbReference type="PANTHER" id="PTHR38762">
    <property type="entry name" value="CRYPTIC OUTER MEMBRANE PORIN BGLH-RELATED"/>
    <property type="match status" value="1"/>
</dbReference>
<dbReference type="PANTHER" id="PTHR38762:SF1">
    <property type="entry name" value="CRYPTIC OUTER MEMBRANE PORIN BGLH-RELATED"/>
    <property type="match status" value="1"/>
</dbReference>
<dbReference type="Pfam" id="PF02264">
    <property type="entry name" value="LamB"/>
    <property type="match status" value="1"/>
</dbReference>
<dbReference type="Pfam" id="PF11471">
    <property type="entry name" value="Sugarporin_N"/>
    <property type="match status" value="1"/>
</dbReference>
<dbReference type="SUPFAM" id="SSF56935">
    <property type="entry name" value="Porins"/>
    <property type="match status" value="1"/>
</dbReference>
<dbReference type="SUPFAM" id="SSF57997">
    <property type="entry name" value="Tropomyosin"/>
    <property type="match status" value="1"/>
</dbReference>
<organism>
    <name type="scientific">Salmonella typhimurium</name>
    <dbReference type="NCBI Taxonomy" id="90371"/>
    <lineage>
        <taxon>Bacteria</taxon>
        <taxon>Pseudomonadati</taxon>
        <taxon>Pseudomonadota</taxon>
        <taxon>Gammaproteobacteria</taxon>
        <taxon>Enterobacterales</taxon>
        <taxon>Enterobacteriaceae</taxon>
        <taxon>Salmonella</taxon>
    </lineage>
</organism>
<accession>P22340</accession>
<proteinExistence type="evidence at protein level"/>
<feature type="signal peptide" evidence="2">
    <location>
        <begin position="1"/>
        <end position="22"/>
    </location>
</feature>
<feature type="chain" id="PRO_0000025187" description="Sucrose porin">
    <location>
        <begin position="23"/>
        <end position="505"/>
    </location>
</feature>
<feature type="region of interest" description="Disordered" evidence="1">
    <location>
        <begin position="44"/>
        <end position="87"/>
    </location>
</feature>
<feature type="compositionally biased region" description="Low complexity" evidence="1">
    <location>
        <begin position="62"/>
        <end position="72"/>
    </location>
</feature>
<feature type="strand" evidence="4">
    <location>
        <begin position="95"/>
        <end position="108"/>
    </location>
</feature>
<feature type="helix" evidence="4">
    <location>
        <begin position="122"/>
        <end position="126"/>
    </location>
</feature>
<feature type="strand" evidence="4">
    <location>
        <begin position="138"/>
        <end position="150"/>
    </location>
</feature>
<feature type="strand" evidence="4">
    <location>
        <begin position="156"/>
        <end position="167"/>
    </location>
</feature>
<feature type="helix" evidence="4">
    <location>
        <begin position="175"/>
        <end position="177"/>
    </location>
</feature>
<feature type="strand" evidence="4">
    <location>
        <begin position="181"/>
        <end position="191"/>
    </location>
</feature>
<feature type="helix" evidence="4">
    <location>
        <begin position="197"/>
        <end position="199"/>
    </location>
</feature>
<feature type="strand" evidence="4">
    <location>
        <begin position="203"/>
        <end position="210"/>
    </location>
</feature>
<feature type="strand" evidence="4">
    <location>
        <begin position="215"/>
        <end position="217"/>
    </location>
</feature>
<feature type="helix" evidence="4">
    <location>
        <begin position="218"/>
        <end position="220"/>
    </location>
</feature>
<feature type="strand" evidence="4">
    <location>
        <begin position="222"/>
        <end position="226"/>
    </location>
</feature>
<feature type="strand" evidence="4">
    <location>
        <begin position="228"/>
        <end position="239"/>
    </location>
</feature>
<feature type="turn" evidence="4">
    <location>
        <begin position="240"/>
        <end position="242"/>
    </location>
</feature>
<feature type="strand" evidence="4">
    <location>
        <begin position="243"/>
        <end position="255"/>
    </location>
</feature>
<feature type="strand" evidence="4">
    <location>
        <begin position="262"/>
        <end position="275"/>
    </location>
</feature>
<feature type="strand" evidence="4">
    <location>
        <begin position="278"/>
        <end position="286"/>
    </location>
</feature>
<feature type="helix" evidence="4">
    <location>
        <begin position="290"/>
        <end position="292"/>
    </location>
</feature>
<feature type="strand" evidence="4">
    <location>
        <begin position="296"/>
        <end position="301"/>
    </location>
</feature>
<feature type="strand" evidence="4">
    <location>
        <begin position="307"/>
        <end position="321"/>
    </location>
</feature>
<feature type="strand" evidence="4">
    <location>
        <begin position="324"/>
        <end position="338"/>
    </location>
</feature>
<feature type="helix" evidence="4">
    <location>
        <begin position="339"/>
        <end position="341"/>
    </location>
</feature>
<feature type="strand" evidence="4">
    <location>
        <begin position="357"/>
        <end position="389"/>
    </location>
</feature>
<feature type="strand" evidence="4">
    <location>
        <begin position="393"/>
        <end position="406"/>
    </location>
</feature>
<feature type="strand" evidence="4">
    <location>
        <begin position="408"/>
        <end position="425"/>
    </location>
</feature>
<feature type="helix" evidence="4">
    <location>
        <begin position="429"/>
        <end position="431"/>
    </location>
</feature>
<feature type="strand" evidence="4">
    <location>
        <begin position="435"/>
        <end position="451"/>
    </location>
</feature>
<feature type="strand" evidence="4">
    <location>
        <begin position="461"/>
        <end position="471"/>
    </location>
</feature>
<feature type="helix" evidence="4">
    <location>
        <begin position="473"/>
        <end position="477"/>
    </location>
</feature>
<feature type="strand" evidence="4">
    <location>
        <begin position="480"/>
        <end position="483"/>
    </location>
</feature>
<feature type="strand" evidence="4">
    <location>
        <begin position="494"/>
        <end position="504"/>
    </location>
</feature>
<name>SCRY_SALTM</name>
<keyword id="KW-0002">3D-structure</keyword>
<keyword id="KW-0998">Cell outer membrane</keyword>
<keyword id="KW-0903">Direct protein sequencing</keyword>
<keyword id="KW-0406">Ion transport</keyword>
<keyword id="KW-0472">Membrane</keyword>
<keyword id="KW-0614">Plasmid</keyword>
<keyword id="KW-0626">Porin</keyword>
<keyword id="KW-0732">Signal</keyword>
<keyword id="KW-0762">Sugar transport</keyword>
<keyword id="KW-0812">Transmembrane</keyword>
<keyword id="KW-1134">Transmembrane beta strand</keyword>
<keyword id="KW-0813">Transport</keyword>
<comment type="function">
    <text>Porin for sucrose uptake.</text>
</comment>
<comment type="subunit">
    <text>Homotrimer.</text>
</comment>
<comment type="subcellular location">
    <subcellularLocation>
        <location>Cell outer membrane</location>
        <topology>Multi-pass membrane protein</topology>
    </subcellularLocation>
</comment>
<comment type="domain">
    <text>The C-terminus helps to anchor the porin to the outer membrane.</text>
</comment>
<comment type="similarity">
    <text evidence="3">Belongs to the porin LamB (TC 1.B.3) family.</text>
</comment>
<geneLocation type="plasmid">
    <name>pUR400</name>
</geneLocation>
<sequence length="505" mass="55467">MYRKSTLAMLIALLTSAASAHAQTDISTIEARLNALEKRLQEAENRAQTAENRAGAAEKKVQQLTAQQQKNQNSTQEVAQRTARLEKKADDKSGFEFHGYARSGVIMNDSGASTKSGAYITPAGETGGAIGRLGNQADTYVEMNLEHKQTLDNGATTRFKVMVADGQTSYNDWTASTSDLNVRQAFVELGNLPTFAGPFKGSTLWAGKRFDRDNFDIHWIDSDVVFLAGTGGGIYDVKWNDGLRSNFSLYGRNFGDIDDSSNSVQNYILTMNHFAGPLQMMVSGLRAKDNDERKDSNGNLAKGDAANTGVHALLGLHNDSFYGLRDGSSKTALLYGHGLGAEVKGIGSDGALRPGADTWRIASYGTTPLSENWSVAPAMLAQRSKDRYADGDSYQWATFNLRLIQAINQNFALAYEGSYQYMDLKPEGYNDRQAVNGSFYKLTFAPTFKVGSIGDFFSRPEIRFYTSWMDWSKKLNNYASDDALGSDGFNSGGEWSFGVQMETWF</sequence>